<evidence type="ECO:0000255" key="1">
    <source>
        <dbReference type="HAMAP-Rule" id="MF_01529"/>
    </source>
</evidence>
<evidence type="ECO:0000305" key="2"/>
<gene>
    <name evidence="1" type="primary">mdtH</name>
    <name type="ordered locus">SDY_2088</name>
</gene>
<name>MDTH_SHIDS</name>
<feature type="chain" id="PRO_0000280500" description="Multidrug resistance protein MdtH">
    <location>
        <begin position="1"/>
        <end position="401"/>
    </location>
</feature>
<feature type="topological domain" description="Cytoplasmic" evidence="1">
    <location>
        <begin position="1"/>
        <end position="12"/>
    </location>
</feature>
<feature type="transmembrane region" description="Helical" evidence="1">
    <location>
        <begin position="13"/>
        <end position="33"/>
    </location>
</feature>
<feature type="topological domain" description="Periplasmic" evidence="1">
    <location>
        <begin position="34"/>
        <end position="98"/>
    </location>
</feature>
<feature type="transmembrane region" description="Helical" evidence="1">
    <location>
        <begin position="99"/>
        <end position="116"/>
    </location>
</feature>
<feature type="topological domain" description="Cytoplasmic" evidence="1">
    <location>
        <begin position="117"/>
        <end position="137"/>
    </location>
</feature>
<feature type="transmembrane region" description="Helical" evidence="1">
    <location>
        <begin position="138"/>
        <end position="158"/>
    </location>
</feature>
<feature type="topological domain" description="Periplasmic" evidence="1">
    <location>
        <begin position="159"/>
        <end position="163"/>
    </location>
</feature>
<feature type="transmembrane region" description="Helical" evidence="1">
    <location>
        <begin position="164"/>
        <end position="184"/>
    </location>
</feature>
<feature type="topological domain" description="Cytoplasmic" evidence="1">
    <location>
        <begin position="185"/>
        <end position="212"/>
    </location>
</feature>
<feature type="transmembrane region" description="Helical" evidence="1">
    <location>
        <begin position="213"/>
        <end position="233"/>
    </location>
</feature>
<feature type="topological domain" description="Periplasmic" evidence="1">
    <location>
        <begin position="234"/>
        <end position="242"/>
    </location>
</feature>
<feature type="transmembrane region" description="Helical" evidence="1">
    <location>
        <begin position="243"/>
        <end position="263"/>
    </location>
</feature>
<feature type="topological domain" description="Cytoplasmic" evidence="1">
    <location>
        <begin position="264"/>
        <end position="275"/>
    </location>
</feature>
<feature type="transmembrane region" description="Helical" evidence="1">
    <location>
        <begin position="276"/>
        <end position="296"/>
    </location>
</feature>
<feature type="topological domain" description="Periplasmic" evidence="1">
    <location>
        <begin position="297"/>
        <end position="298"/>
    </location>
</feature>
<feature type="transmembrane region" description="Helical" evidence="1">
    <location>
        <begin position="299"/>
        <end position="319"/>
    </location>
</feature>
<feature type="topological domain" description="Cytoplasmic" evidence="1">
    <location>
        <begin position="320"/>
        <end position="338"/>
    </location>
</feature>
<feature type="transmembrane region" description="Helical" evidence="1">
    <location>
        <begin position="339"/>
        <end position="359"/>
    </location>
</feature>
<feature type="topological domain" description="Periplasmic" evidence="1">
    <location>
        <begin position="360"/>
        <end position="366"/>
    </location>
</feature>
<feature type="transmembrane region" description="Helical" evidence="1">
    <location>
        <begin position="367"/>
        <end position="387"/>
    </location>
</feature>
<feature type="topological domain" description="Cytoplasmic" evidence="1">
    <location>
        <begin position="388"/>
        <end position="401"/>
    </location>
</feature>
<comment type="subcellular location">
    <subcellularLocation>
        <location evidence="1">Cell inner membrane</location>
        <topology evidence="1">Multi-pass membrane protein</topology>
    </subcellularLocation>
</comment>
<comment type="similarity">
    <text evidence="1">Belongs to the major facilitator superfamily. DHA1 family. MdtH (TC 2.A.1.2.21) subfamily.</text>
</comment>
<comment type="sequence caution" evidence="2">
    <conflict type="frameshift">
        <sequence resource="EMBL-CDS" id="ABB62179"/>
    </conflict>
</comment>
<keyword id="KW-0997">Cell inner membrane</keyword>
<keyword id="KW-1003">Cell membrane</keyword>
<keyword id="KW-0472">Membrane</keyword>
<keyword id="KW-1185">Reference proteome</keyword>
<keyword id="KW-0812">Transmembrane</keyword>
<keyword id="KW-1133">Transmembrane helix</keyword>
<keyword id="KW-0813">Transport</keyword>
<sequence length="401" mass="44255">MSRVSQARNLGKYFLLIDNMLVVLGFFVVFPLVSIRFVDQMGWAAVMVGIALGLRQFIQQGLGIFGGAIADRFGAKPMIVTGMLMRAAGFATMGIAHEPWLLWFSCLLSGLGGTLFDPPRSALVVKLMPQQRGRFFSLLMMQDSAGAVIGALLGSWLLQYDFRLVCATGAVLFVLCAAFNAWLLPAWKLSTIRTPVREGMTRVMRDKRFVTYVLTLAGYYMLAVQVMLMLPIMVNDVAGAPSAVKWMYAIEACLSLTLLYPIARWSEKHFRLEHRLMAGLLIMSLSMMPVGMVSGLQQLFTLICLFYIGSIIAEPARETLSASLADARARGSYMGFSRLGLAIGGTIGYIGGGWLFDLGKSAHQPELPWMMLGIIGIFTFLALGWQFSQKRAARRLLERDA</sequence>
<proteinExistence type="inferred from homology"/>
<reference key="1">
    <citation type="journal article" date="2005" name="Nucleic Acids Res.">
        <title>Genome dynamics and diversity of Shigella species, the etiologic agents of bacillary dysentery.</title>
        <authorList>
            <person name="Yang F."/>
            <person name="Yang J."/>
            <person name="Zhang X."/>
            <person name="Chen L."/>
            <person name="Jiang Y."/>
            <person name="Yan Y."/>
            <person name="Tang X."/>
            <person name="Wang J."/>
            <person name="Xiong Z."/>
            <person name="Dong J."/>
            <person name="Xue Y."/>
            <person name="Zhu Y."/>
            <person name="Xu X."/>
            <person name="Sun L."/>
            <person name="Chen S."/>
            <person name="Nie H."/>
            <person name="Peng J."/>
            <person name="Xu J."/>
            <person name="Wang Y."/>
            <person name="Yuan Z."/>
            <person name="Wen Y."/>
            <person name="Yao Z."/>
            <person name="Shen Y."/>
            <person name="Qiang B."/>
            <person name="Hou Y."/>
            <person name="Yu J."/>
            <person name="Jin Q."/>
        </authorList>
    </citation>
    <scope>NUCLEOTIDE SEQUENCE [LARGE SCALE GENOMIC DNA]</scope>
    <source>
        <strain>Sd197</strain>
    </source>
</reference>
<protein>
    <recommendedName>
        <fullName evidence="1">Multidrug resistance protein MdtH</fullName>
    </recommendedName>
</protein>
<organism>
    <name type="scientific">Shigella dysenteriae serotype 1 (strain Sd197)</name>
    <dbReference type="NCBI Taxonomy" id="300267"/>
    <lineage>
        <taxon>Bacteria</taxon>
        <taxon>Pseudomonadati</taxon>
        <taxon>Pseudomonadota</taxon>
        <taxon>Gammaproteobacteria</taxon>
        <taxon>Enterobacterales</taxon>
        <taxon>Enterobacteriaceae</taxon>
        <taxon>Shigella</taxon>
    </lineage>
</organism>
<accession>Q32ES6</accession>
<dbReference type="EMBL" id="CP000034">
    <property type="protein sequence ID" value="ABB62179.1"/>
    <property type="status" value="ALT_FRAME"/>
    <property type="molecule type" value="Genomic_DNA"/>
</dbReference>
<dbReference type="SMR" id="Q32ES6"/>
<dbReference type="STRING" id="300267.SDY_2088"/>
<dbReference type="EnsemblBacteria" id="ABB62179">
    <property type="protein sequence ID" value="ABB62179"/>
    <property type="gene ID" value="SDY_2088"/>
</dbReference>
<dbReference type="KEGG" id="sdy:SDY_2088"/>
<dbReference type="HOGENOM" id="CLU_108837_0_0_6"/>
<dbReference type="Proteomes" id="UP000002716">
    <property type="component" value="Chromosome"/>
</dbReference>
<dbReference type="GO" id="GO:0005886">
    <property type="term" value="C:plasma membrane"/>
    <property type="evidence" value="ECO:0007669"/>
    <property type="project" value="UniProtKB-SubCell"/>
</dbReference>
<dbReference type="GO" id="GO:0022857">
    <property type="term" value="F:transmembrane transporter activity"/>
    <property type="evidence" value="ECO:0007669"/>
    <property type="project" value="UniProtKB-UniRule"/>
</dbReference>
<dbReference type="CDD" id="cd17329">
    <property type="entry name" value="MFS_MdtH_MDR_like"/>
    <property type="match status" value="1"/>
</dbReference>
<dbReference type="FunFam" id="1.20.1250.20:FF:000039">
    <property type="entry name" value="Multidrug resistance protein MdtH"/>
    <property type="match status" value="1"/>
</dbReference>
<dbReference type="Gene3D" id="1.20.1250.20">
    <property type="entry name" value="MFS general substrate transporter like domains"/>
    <property type="match status" value="1"/>
</dbReference>
<dbReference type="HAMAP" id="MF_01529">
    <property type="entry name" value="MFS_MdtH"/>
    <property type="match status" value="1"/>
</dbReference>
<dbReference type="InterPro" id="IPR011701">
    <property type="entry name" value="MFS"/>
</dbReference>
<dbReference type="InterPro" id="IPR020846">
    <property type="entry name" value="MFS_dom"/>
</dbReference>
<dbReference type="InterPro" id="IPR036259">
    <property type="entry name" value="MFS_trans_sf"/>
</dbReference>
<dbReference type="InterPro" id="IPR050171">
    <property type="entry name" value="MFS_Transporters"/>
</dbReference>
<dbReference type="InterPro" id="IPR022855">
    <property type="entry name" value="Multidrug-R_MdtH"/>
</dbReference>
<dbReference type="NCBIfam" id="NF008650">
    <property type="entry name" value="PRK11646.1"/>
    <property type="match status" value="1"/>
</dbReference>
<dbReference type="PANTHER" id="PTHR23517:SF2">
    <property type="entry name" value="MULTIDRUG RESISTANCE PROTEIN MDTH"/>
    <property type="match status" value="1"/>
</dbReference>
<dbReference type="PANTHER" id="PTHR23517">
    <property type="entry name" value="RESISTANCE PROTEIN MDTM, PUTATIVE-RELATED-RELATED"/>
    <property type="match status" value="1"/>
</dbReference>
<dbReference type="Pfam" id="PF07690">
    <property type="entry name" value="MFS_1"/>
    <property type="match status" value="1"/>
</dbReference>
<dbReference type="SUPFAM" id="SSF103473">
    <property type="entry name" value="MFS general substrate transporter"/>
    <property type="match status" value="1"/>
</dbReference>
<dbReference type="PROSITE" id="PS50850">
    <property type="entry name" value="MFS"/>
    <property type="match status" value="1"/>
</dbReference>